<protein>
    <recommendedName>
        <fullName evidence="7">Calcium/calmodulin-regulated receptor-like kinase 2</fullName>
        <shortName evidence="7">AtCRLK2</shortName>
        <ecNumber>2.7.11.1</ecNumber>
    </recommendedName>
</protein>
<name>CRLK2_ARATH</name>
<sequence>MVNRSDLVVIGISVGLALGLLLALLLFFAIKWYYGRSHLRRCANEQNSPTLPVHTAKRGVVIPDDRANTESSQPPENGAPTQHQPWWNNHTKDLTVSASGIPRYNYKDIQKATQNFTTVLGQGSFGPVYKAVMPNGELAAAKVHGSNSSQGDREFQTEVSLLGRLHHRNLVNLTGYCVDKSHRMLIYEFMSNGSLENLLYGGEGMQVLNWEERLQIALDISHGIEYLHEGAVPPVIHRDLKSANILLDHSMRAKVADFGLSKEMVLDRMTSGLKGTHGYMDPTYISTNKYTMKSDIYSFGVIILELITAIHPQQNLMEYINLASMSPDGIDEILDQKLVGNASIEEVRLLAKIANRCVHKTPRKRPSIGEVTQFILKIKQSRSRGRRQDTMSSSFGVGYEEDLSRVMSRIKDQHVELGLLAGVKEENHQERNIATT</sequence>
<keyword id="KW-0025">Alternative splicing</keyword>
<keyword id="KW-0067">ATP-binding</keyword>
<keyword id="KW-1003">Cell membrane</keyword>
<keyword id="KW-0418">Kinase</keyword>
<keyword id="KW-0472">Membrane</keyword>
<keyword id="KW-0547">Nucleotide-binding</keyword>
<keyword id="KW-0597">Phosphoprotein</keyword>
<keyword id="KW-1185">Reference proteome</keyword>
<keyword id="KW-0723">Serine/threonine-protein kinase</keyword>
<keyword id="KW-0808">Transferase</keyword>
<keyword id="KW-0812">Transmembrane</keyword>
<keyword id="KW-1133">Transmembrane helix</keyword>
<reference key="1">
    <citation type="journal article" date="2000" name="Nature">
        <title>Sequence and analysis of chromosome 5 of the plant Arabidopsis thaliana.</title>
        <authorList>
            <person name="Tabata S."/>
            <person name="Kaneko T."/>
            <person name="Nakamura Y."/>
            <person name="Kotani H."/>
            <person name="Kato T."/>
            <person name="Asamizu E."/>
            <person name="Miyajima N."/>
            <person name="Sasamoto S."/>
            <person name="Kimura T."/>
            <person name="Hosouchi T."/>
            <person name="Kawashima K."/>
            <person name="Kohara M."/>
            <person name="Matsumoto M."/>
            <person name="Matsuno A."/>
            <person name="Muraki A."/>
            <person name="Nakayama S."/>
            <person name="Nakazaki N."/>
            <person name="Naruo K."/>
            <person name="Okumura S."/>
            <person name="Shinpo S."/>
            <person name="Takeuchi C."/>
            <person name="Wada T."/>
            <person name="Watanabe A."/>
            <person name="Yamada M."/>
            <person name="Yasuda M."/>
            <person name="Sato S."/>
            <person name="de la Bastide M."/>
            <person name="Huang E."/>
            <person name="Spiegel L."/>
            <person name="Gnoj L."/>
            <person name="O'Shaughnessy A."/>
            <person name="Preston R."/>
            <person name="Habermann K."/>
            <person name="Murray J."/>
            <person name="Johnson D."/>
            <person name="Rohlfing T."/>
            <person name="Nelson J."/>
            <person name="Stoneking T."/>
            <person name="Pepin K."/>
            <person name="Spieth J."/>
            <person name="Sekhon M."/>
            <person name="Armstrong J."/>
            <person name="Becker M."/>
            <person name="Belter E."/>
            <person name="Cordum H."/>
            <person name="Cordes M."/>
            <person name="Courtney L."/>
            <person name="Courtney W."/>
            <person name="Dante M."/>
            <person name="Du H."/>
            <person name="Edwards J."/>
            <person name="Fryman J."/>
            <person name="Haakensen B."/>
            <person name="Lamar E."/>
            <person name="Latreille P."/>
            <person name="Leonard S."/>
            <person name="Meyer R."/>
            <person name="Mulvaney E."/>
            <person name="Ozersky P."/>
            <person name="Riley A."/>
            <person name="Strowmatt C."/>
            <person name="Wagner-McPherson C."/>
            <person name="Wollam A."/>
            <person name="Yoakum M."/>
            <person name="Bell M."/>
            <person name="Dedhia N."/>
            <person name="Parnell L."/>
            <person name="Shah R."/>
            <person name="Rodriguez M."/>
            <person name="Hoon See L."/>
            <person name="Vil D."/>
            <person name="Baker J."/>
            <person name="Kirchoff K."/>
            <person name="Toth K."/>
            <person name="King L."/>
            <person name="Bahret A."/>
            <person name="Miller B."/>
            <person name="Marra M.A."/>
            <person name="Martienssen R."/>
            <person name="McCombie W.R."/>
            <person name="Wilson R.K."/>
            <person name="Murphy G."/>
            <person name="Bancroft I."/>
            <person name="Volckaert G."/>
            <person name="Wambutt R."/>
            <person name="Duesterhoeft A."/>
            <person name="Stiekema W."/>
            <person name="Pohl T."/>
            <person name="Entian K.-D."/>
            <person name="Terryn N."/>
            <person name="Hartley N."/>
            <person name="Bent E."/>
            <person name="Johnson S."/>
            <person name="Langham S.-A."/>
            <person name="McCullagh B."/>
            <person name="Robben J."/>
            <person name="Grymonprez B."/>
            <person name="Zimmermann W."/>
            <person name="Ramsperger U."/>
            <person name="Wedler H."/>
            <person name="Balke K."/>
            <person name="Wedler E."/>
            <person name="Peters S."/>
            <person name="van Staveren M."/>
            <person name="Dirkse W."/>
            <person name="Mooijman P."/>
            <person name="Klein Lankhorst R."/>
            <person name="Weitzenegger T."/>
            <person name="Bothe G."/>
            <person name="Rose M."/>
            <person name="Hauf J."/>
            <person name="Berneiser S."/>
            <person name="Hempel S."/>
            <person name="Feldpausch M."/>
            <person name="Lamberth S."/>
            <person name="Villarroel R."/>
            <person name="Gielen J."/>
            <person name="Ardiles W."/>
            <person name="Bents O."/>
            <person name="Lemcke K."/>
            <person name="Kolesov G."/>
            <person name="Mayer K.F.X."/>
            <person name="Rudd S."/>
            <person name="Schoof H."/>
            <person name="Schueller C."/>
            <person name="Zaccaria P."/>
            <person name="Mewes H.-W."/>
            <person name="Bevan M."/>
            <person name="Fransz P.F."/>
        </authorList>
    </citation>
    <scope>NUCLEOTIDE SEQUENCE [LARGE SCALE GENOMIC DNA]</scope>
    <source>
        <strain>cv. Columbia</strain>
    </source>
</reference>
<reference key="2">
    <citation type="journal article" date="2017" name="Plant J.">
        <title>Araport11: a complete reannotation of the Arabidopsis thaliana reference genome.</title>
        <authorList>
            <person name="Cheng C.Y."/>
            <person name="Krishnakumar V."/>
            <person name="Chan A.P."/>
            <person name="Thibaud-Nissen F."/>
            <person name="Schobel S."/>
            <person name="Town C.D."/>
        </authorList>
    </citation>
    <scope>GENOME REANNOTATION</scope>
    <source>
        <strain>cv. Columbia</strain>
    </source>
</reference>
<reference key="3">
    <citation type="submission" date="2005-03" db="EMBL/GenBank/DDBJ databases">
        <title>Large-scale analysis of RIKEN Arabidopsis full-length (RAFL) cDNAs.</title>
        <authorList>
            <person name="Totoki Y."/>
            <person name="Seki M."/>
            <person name="Ishida J."/>
            <person name="Nakajima M."/>
            <person name="Enju A."/>
            <person name="Kamiya A."/>
            <person name="Narusaka M."/>
            <person name="Shin-i T."/>
            <person name="Nakagawa M."/>
            <person name="Sakamoto N."/>
            <person name="Oishi K."/>
            <person name="Kohara Y."/>
            <person name="Kobayashi M."/>
            <person name="Toyoda A."/>
            <person name="Sakaki Y."/>
            <person name="Sakurai T."/>
            <person name="Iida K."/>
            <person name="Akiyama K."/>
            <person name="Satou M."/>
            <person name="Toyoda T."/>
            <person name="Konagaya A."/>
            <person name="Carninci P."/>
            <person name="Kawai J."/>
            <person name="Hayashizaki Y."/>
            <person name="Shinozaki K."/>
        </authorList>
    </citation>
    <scope>NUCLEOTIDE SEQUENCE [LARGE SCALE MRNA] (ISOFORM 1)</scope>
    <source>
        <strain>cv. Columbia</strain>
    </source>
</reference>
<reference key="4">
    <citation type="submission" date="2002-03" db="EMBL/GenBank/DDBJ databases">
        <title>Full-length cDNA from Arabidopsis thaliana.</title>
        <authorList>
            <person name="Brover V.V."/>
            <person name="Troukhan M.E."/>
            <person name="Alexandrov N.A."/>
            <person name="Lu Y.-P."/>
            <person name="Flavell R.B."/>
            <person name="Feldmann K.A."/>
        </authorList>
    </citation>
    <scope>NUCLEOTIDE SEQUENCE [LARGE SCALE MRNA] (ISOFORM 2)</scope>
</reference>
<reference key="5">
    <citation type="journal article" date="2010" name="FEBS Lett.">
        <title>Characterization of GmCaMK1, a member of a soybean calmodulin-binding receptor-like kinase family.</title>
        <authorList>
            <person name="DeFalco T.A."/>
            <person name="Chiasson D."/>
            <person name="Munro K."/>
            <person name="Kaiser B.N."/>
            <person name="Snedden W.A."/>
        </authorList>
    </citation>
    <scope>GENE FAMILY</scope>
</reference>
<proteinExistence type="evidence at transcript level"/>
<gene>
    <name evidence="7" type="primary">CRLK2</name>
    <name type="ordered locus">At5g15730</name>
    <name type="ORF">F14F8.110</name>
</gene>
<comment type="catalytic activity">
    <reaction>
        <text>L-seryl-[protein] + ATP = O-phospho-L-seryl-[protein] + ADP + H(+)</text>
        <dbReference type="Rhea" id="RHEA:17989"/>
        <dbReference type="Rhea" id="RHEA-COMP:9863"/>
        <dbReference type="Rhea" id="RHEA-COMP:11604"/>
        <dbReference type="ChEBI" id="CHEBI:15378"/>
        <dbReference type="ChEBI" id="CHEBI:29999"/>
        <dbReference type="ChEBI" id="CHEBI:30616"/>
        <dbReference type="ChEBI" id="CHEBI:83421"/>
        <dbReference type="ChEBI" id="CHEBI:456216"/>
        <dbReference type="EC" id="2.7.11.1"/>
    </reaction>
</comment>
<comment type="catalytic activity">
    <reaction>
        <text>L-threonyl-[protein] + ATP = O-phospho-L-threonyl-[protein] + ADP + H(+)</text>
        <dbReference type="Rhea" id="RHEA:46608"/>
        <dbReference type="Rhea" id="RHEA-COMP:11060"/>
        <dbReference type="Rhea" id="RHEA-COMP:11605"/>
        <dbReference type="ChEBI" id="CHEBI:15378"/>
        <dbReference type="ChEBI" id="CHEBI:30013"/>
        <dbReference type="ChEBI" id="CHEBI:30616"/>
        <dbReference type="ChEBI" id="CHEBI:61977"/>
        <dbReference type="ChEBI" id="CHEBI:456216"/>
        <dbReference type="EC" id="2.7.11.1"/>
    </reaction>
</comment>
<comment type="subcellular location">
    <subcellularLocation>
        <location evidence="1">Cell membrane</location>
        <topology evidence="1">Single-pass membrane protein</topology>
    </subcellularLocation>
</comment>
<comment type="alternative products">
    <event type="alternative splicing"/>
    <isoform>
        <id>Q9LFV3-1</id>
        <name>1</name>
        <sequence type="displayed"/>
    </isoform>
    <isoform>
        <id>Q9LFV3-2</id>
        <name>2</name>
        <sequence type="described" ref="VSP_040159"/>
    </isoform>
</comment>
<comment type="similarity">
    <text evidence="4">Belongs to the protein kinase superfamily. Ser/Thr protein kinase family.</text>
</comment>
<evidence type="ECO:0000250" key="1"/>
<evidence type="ECO:0000250" key="2">
    <source>
        <dbReference type="UniProtKB" id="O48814"/>
    </source>
</evidence>
<evidence type="ECO:0000255" key="3"/>
<evidence type="ECO:0000255" key="4">
    <source>
        <dbReference type="PROSITE-ProRule" id="PRU00159"/>
    </source>
</evidence>
<evidence type="ECO:0000255" key="5">
    <source>
        <dbReference type="PROSITE-ProRule" id="PRU10027"/>
    </source>
</evidence>
<evidence type="ECO:0000256" key="6">
    <source>
        <dbReference type="SAM" id="MobiDB-lite"/>
    </source>
</evidence>
<evidence type="ECO:0000303" key="7">
    <source>
    </source>
</evidence>
<evidence type="ECO:0000303" key="8">
    <source ref="4"/>
</evidence>
<evidence type="ECO:0000305" key="9"/>
<accession>Q9LFV3</accession>
<accession>Q570M6</accession>
<accession>Q8LCL1</accession>
<dbReference type="EC" id="2.7.11.1"/>
<dbReference type="EMBL" id="AL391144">
    <property type="protein sequence ID" value="CAC01772.1"/>
    <property type="molecule type" value="Genomic_DNA"/>
</dbReference>
<dbReference type="EMBL" id="CP002688">
    <property type="protein sequence ID" value="AED92198.1"/>
    <property type="molecule type" value="Genomic_DNA"/>
</dbReference>
<dbReference type="EMBL" id="CP002688">
    <property type="protein sequence ID" value="AED92199.1"/>
    <property type="molecule type" value="Genomic_DNA"/>
</dbReference>
<dbReference type="EMBL" id="CP002688">
    <property type="protein sequence ID" value="ANM69538.1"/>
    <property type="molecule type" value="Genomic_DNA"/>
</dbReference>
<dbReference type="EMBL" id="AK220682">
    <property type="protein sequence ID" value="BAD93743.1"/>
    <property type="molecule type" value="mRNA"/>
</dbReference>
<dbReference type="EMBL" id="AY086538">
    <property type="protein sequence ID" value="AAM63603.1"/>
    <property type="molecule type" value="mRNA"/>
</dbReference>
<dbReference type="PIR" id="T51402">
    <property type="entry name" value="T51402"/>
</dbReference>
<dbReference type="RefSeq" id="NP_001078591.1">
    <molecule id="Q9LFV3-1"/>
    <property type="nucleotide sequence ID" value="NM_001085122.3"/>
</dbReference>
<dbReference type="RefSeq" id="NP_001331208.1">
    <molecule id="Q9LFV3-1"/>
    <property type="nucleotide sequence ID" value="NM_001343420.1"/>
</dbReference>
<dbReference type="RefSeq" id="NP_568320.1">
    <molecule id="Q9LFV3-2"/>
    <property type="nucleotide sequence ID" value="NM_121578.4"/>
</dbReference>
<dbReference type="SMR" id="Q9LFV3"/>
<dbReference type="FunCoup" id="Q9LFV3">
    <property type="interactions" value="1129"/>
</dbReference>
<dbReference type="IntAct" id="Q9LFV3">
    <property type="interactions" value="1"/>
</dbReference>
<dbReference type="MINT" id="Q9LFV3"/>
<dbReference type="STRING" id="3702.Q9LFV3"/>
<dbReference type="iPTMnet" id="Q9LFV3"/>
<dbReference type="PaxDb" id="3702-AT5G15730.2"/>
<dbReference type="ProteomicsDB" id="220341">
    <molecule id="Q9LFV3-1"/>
</dbReference>
<dbReference type="EnsemblPlants" id="AT5G15730.1">
    <molecule id="Q9LFV3-2"/>
    <property type="protein sequence ID" value="AT5G15730.1"/>
    <property type="gene ID" value="AT5G15730"/>
</dbReference>
<dbReference type="EnsemblPlants" id="AT5G15730.2">
    <molecule id="Q9LFV3-1"/>
    <property type="protein sequence ID" value="AT5G15730.2"/>
    <property type="gene ID" value="AT5G15730"/>
</dbReference>
<dbReference type="EnsemblPlants" id="AT5G15730.3">
    <molecule id="Q9LFV3-1"/>
    <property type="protein sequence ID" value="AT5G15730.3"/>
    <property type="gene ID" value="AT5G15730"/>
</dbReference>
<dbReference type="GeneID" id="831429"/>
<dbReference type="Gramene" id="AT5G15730.1">
    <molecule id="Q9LFV3-2"/>
    <property type="protein sequence ID" value="AT5G15730.1"/>
    <property type="gene ID" value="AT5G15730"/>
</dbReference>
<dbReference type="Gramene" id="AT5G15730.2">
    <molecule id="Q9LFV3-1"/>
    <property type="protein sequence ID" value="AT5G15730.2"/>
    <property type="gene ID" value="AT5G15730"/>
</dbReference>
<dbReference type="Gramene" id="AT5G15730.3">
    <molecule id="Q9LFV3-1"/>
    <property type="protein sequence ID" value="AT5G15730.3"/>
    <property type="gene ID" value="AT5G15730"/>
</dbReference>
<dbReference type="KEGG" id="ath:AT5G15730"/>
<dbReference type="Araport" id="AT5G15730"/>
<dbReference type="TAIR" id="AT5G15730">
    <property type="gene designation" value="CRLK2"/>
</dbReference>
<dbReference type="eggNOG" id="KOG1187">
    <property type="taxonomic scope" value="Eukaryota"/>
</dbReference>
<dbReference type="InParanoid" id="Q9LFV3"/>
<dbReference type="OMA" id="WWNHQNK"/>
<dbReference type="OrthoDB" id="4062651at2759"/>
<dbReference type="PhylomeDB" id="Q9LFV3"/>
<dbReference type="PRO" id="PR:Q9LFV3"/>
<dbReference type="Proteomes" id="UP000006548">
    <property type="component" value="Chromosome 5"/>
</dbReference>
<dbReference type="ExpressionAtlas" id="Q9LFV3">
    <property type="expression patterns" value="baseline and differential"/>
</dbReference>
<dbReference type="GO" id="GO:0005886">
    <property type="term" value="C:plasma membrane"/>
    <property type="evidence" value="ECO:0007669"/>
    <property type="project" value="UniProtKB-SubCell"/>
</dbReference>
<dbReference type="GO" id="GO:0009536">
    <property type="term" value="C:plastid"/>
    <property type="evidence" value="ECO:0007005"/>
    <property type="project" value="TAIR"/>
</dbReference>
<dbReference type="GO" id="GO:0005524">
    <property type="term" value="F:ATP binding"/>
    <property type="evidence" value="ECO:0007669"/>
    <property type="project" value="UniProtKB-KW"/>
</dbReference>
<dbReference type="GO" id="GO:0106310">
    <property type="term" value="F:protein serine kinase activity"/>
    <property type="evidence" value="ECO:0007669"/>
    <property type="project" value="RHEA"/>
</dbReference>
<dbReference type="GO" id="GO:0004674">
    <property type="term" value="F:protein serine/threonine kinase activity"/>
    <property type="evidence" value="ECO:0007669"/>
    <property type="project" value="UniProtKB-KW"/>
</dbReference>
<dbReference type="CDD" id="cd14066">
    <property type="entry name" value="STKc_IRAK"/>
    <property type="match status" value="1"/>
</dbReference>
<dbReference type="FunFam" id="1.10.510.10:FF:000496">
    <property type="entry name" value="Calcium/calmodulin-regulated receptor-like kinase 2"/>
    <property type="match status" value="1"/>
</dbReference>
<dbReference type="FunFam" id="3.30.200.20:FF:000178">
    <property type="entry name" value="serine/threonine-protein kinase PBS1-like"/>
    <property type="match status" value="1"/>
</dbReference>
<dbReference type="Gene3D" id="3.30.200.20">
    <property type="entry name" value="Phosphorylase Kinase, domain 1"/>
    <property type="match status" value="1"/>
</dbReference>
<dbReference type="Gene3D" id="1.10.510.10">
    <property type="entry name" value="Transferase(Phosphotransferase) domain 1"/>
    <property type="match status" value="1"/>
</dbReference>
<dbReference type="InterPro" id="IPR011009">
    <property type="entry name" value="Kinase-like_dom_sf"/>
</dbReference>
<dbReference type="InterPro" id="IPR000719">
    <property type="entry name" value="Prot_kinase_dom"/>
</dbReference>
<dbReference type="InterPro" id="IPR008271">
    <property type="entry name" value="Ser/Thr_kinase_AS"/>
</dbReference>
<dbReference type="PANTHER" id="PTHR47989:SF43">
    <property type="entry name" value="CALCIUM_CALMODULIN-REGULATED RECEPTOR-LIKE KINASE 2"/>
    <property type="match status" value="1"/>
</dbReference>
<dbReference type="PANTHER" id="PTHR47989">
    <property type="entry name" value="OS01G0750732 PROTEIN"/>
    <property type="match status" value="1"/>
</dbReference>
<dbReference type="Pfam" id="PF00069">
    <property type="entry name" value="Pkinase"/>
    <property type="match status" value="1"/>
</dbReference>
<dbReference type="SMART" id="SM00220">
    <property type="entry name" value="S_TKc"/>
    <property type="match status" value="1"/>
</dbReference>
<dbReference type="SUPFAM" id="SSF56112">
    <property type="entry name" value="Protein kinase-like (PK-like)"/>
    <property type="match status" value="1"/>
</dbReference>
<dbReference type="PROSITE" id="PS50011">
    <property type="entry name" value="PROTEIN_KINASE_DOM"/>
    <property type="match status" value="1"/>
</dbReference>
<dbReference type="PROSITE" id="PS00108">
    <property type="entry name" value="PROTEIN_KINASE_ST"/>
    <property type="match status" value="1"/>
</dbReference>
<feature type="chain" id="PRO_0000401332" description="Calcium/calmodulin-regulated receptor-like kinase 2">
    <location>
        <begin position="1"/>
        <end position="436"/>
    </location>
</feature>
<feature type="transmembrane region" description="Helical" evidence="3">
    <location>
        <begin position="7"/>
        <end position="34"/>
    </location>
</feature>
<feature type="domain" description="Protein kinase" evidence="4">
    <location>
        <begin position="114"/>
        <end position="375"/>
    </location>
</feature>
<feature type="region of interest" description="Disordered" evidence="6">
    <location>
        <begin position="65"/>
        <end position="88"/>
    </location>
</feature>
<feature type="compositionally biased region" description="Polar residues" evidence="6">
    <location>
        <begin position="69"/>
        <end position="88"/>
    </location>
</feature>
<feature type="active site" description="Proton acceptor" evidence="4 5">
    <location>
        <position position="239"/>
    </location>
</feature>
<feature type="binding site" evidence="4">
    <location>
        <begin position="120"/>
        <end position="128"/>
    </location>
    <ligand>
        <name>ATP</name>
        <dbReference type="ChEBI" id="CHEBI:30616"/>
    </ligand>
</feature>
<feature type="binding site" evidence="4">
    <location>
        <position position="142"/>
    </location>
    <ligand>
        <name>ATP</name>
        <dbReference type="ChEBI" id="CHEBI:30616"/>
    </ligand>
</feature>
<feature type="modified residue" description="Phosphotyrosine" evidence="2">
    <location>
        <position position="187"/>
    </location>
</feature>
<feature type="modified residue" description="Phosphothreonine" evidence="2">
    <location>
        <position position="276"/>
    </location>
</feature>
<feature type="modified residue" description="Phosphotyrosine" evidence="2">
    <location>
        <position position="284"/>
    </location>
</feature>
<feature type="splice variant" id="VSP_040159" description="In isoform 2." evidence="8">
    <location>
        <begin position="202"/>
        <end position="203"/>
    </location>
</feature>
<feature type="sequence conflict" description="In Ref. 3; BAD93743." evidence="9" ref="3">
    <original>L</original>
    <variation>P</variation>
    <location>
        <position position="39"/>
    </location>
</feature>
<organism>
    <name type="scientific">Arabidopsis thaliana</name>
    <name type="common">Mouse-ear cress</name>
    <dbReference type="NCBI Taxonomy" id="3702"/>
    <lineage>
        <taxon>Eukaryota</taxon>
        <taxon>Viridiplantae</taxon>
        <taxon>Streptophyta</taxon>
        <taxon>Embryophyta</taxon>
        <taxon>Tracheophyta</taxon>
        <taxon>Spermatophyta</taxon>
        <taxon>Magnoliopsida</taxon>
        <taxon>eudicotyledons</taxon>
        <taxon>Gunneridae</taxon>
        <taxon>Pentapetalae</taxon>
        <taxon>rosids</taxon>
        <taxon>malvids</taxon>
        <taxon>Brassicales</taxon>
        <taxon>Brassicaceae</taxon>
        <taxon>Camelineae</taxon>
        <taxon>Arabidopsis</taxon>
    </lineage>
</organism>